<accession>Q1RM55</accession>
<accession>A1L208</accession>
<accession>Q0V938</accession>
<accession>Q4V8T6</accession>
<accession>Q5XJL7</accession>
<organism>
    <name type="scientific">Danio rerio</name>
    <name type="common">Zebrafish</name>
    <name type="synonym">Brachydanio rerio</name>
    <dbReference type="NCBI Taxonomy" id="7955"/>
    <lineage>
        <taxon>Eukaryota</taxon>
        <taxon>Metazoa</taxon>
        <taxon>Chordata</taxon>
        <taxon>Craniata</taxon>
        <taxon>Vertebrata</taxon>
        <taxon>Euteleostomi</taxon>
        <taxon>Actinopterygii</taxon>
        <taxon>Neopterygii</taxon>
        <taxon>Teleostei</taxon>
        <taxon>Ostariophysi</taxon>
        <taxon>Cypriniformes</taxon>
        <taxon>Danionidae</taxon>
        <taxon>Danioninae</taxon>
        <taxon>Danio</taxon>
    </lineage>
</organism>
<comment type="function">
    <text evidence="2">Involved in the assembly of C/D box small nucleolar ribonucleoprotein (snoRNP) particles (By similarity). Recruits the SWI/SNF complex to the core promoter of rRNA genes and enhances pre-rRNA transcription (By similarity). Mediates interaction of TELO2 with the R2TP complex which is necessary for the stability of MTOR and SMG1 (By similarity). Positively regulates the assembly and activity of the mTORC1 complex (By similarity).</text>
</comment>
<comment type="subcellular location">
    <subcellularLocation>
        <location evidence="1">Nucleus</location>
    </subcellularLocation>
</comment>
<comment type="similarity">
    <text evidence="3">Belongs to the PIH1 family.</text>
</comment>
<comment type="sequence caution" evidence="3">
    <conflict type="erroneous initiation">
        <sequence resource="EMBL-CDS" id="AAH97205"/>
    </conflict>
</comment>
<comment type="sequence caution" evidence="3">
    <conflict type="erroneous initiation">
        <sequence resource="EMBL-CDS" id="AAI15131"/>
    </conflict>
</comment>
<comment type="sequence caution" evidence="3">
    <conflict type="erroneous initiation">
        <sequence resource="EMBL-CDS" id="AAI21771"/>
    </conflict>
</comment>
<comment type="sequence caution" evidence="3">
    <conflict type="erroneous initiation">
        <sequence resource="EMBL-CDS" id="AAI29298"/>
    </conflict>
</comment>
<name>PIHD1_DANRE</name>
<keyword id="KW-0539">Nucleus</keyword>
<keyword id="KW-1185">Reference proteome</keyword>
<keyword id="KW-0804">Transcription</keyword>
<keyword id="KW-0805">Transcription regulation</keyword>
<evidence type="ECO:0000250" key="1">
    <source>
        <dbReference type="UniProtKB" id="Q9CQJ2"/>
    </source>
</evidence>
<evidence type="ECO:0000250" key="2">
    <source>
        <dbReference type="UniProtKB" id="Q9NWS0"/>
    </source>
</evidence>
<evidence type="ECO:0000305" key="3"/>
<reference key="1">
    <citation type="submission" date="2006-04" db="EMBL/GenBank/DDBJ databases">
        <authorList>
            <consortium name="NIH - Zebrafish Gene Collection (ZGC) project"/>
        </authorList>
    </citation>
    <scope>NUCLEOTIDE SEQUENCE [LARGE SCALE MRNA]</scope>
    <source>
        <tissue>Eye</tissue>
        <tissue>Olfactory epithelium</tissue>
    </source>
</reference>
<proteinExistence type="evidence at transcript level"/>
<feature type="chain" id="PRO_0000307331" description="PIH1 domain-containing protein 1">
    <location>
        <begin position="1"/>
        <end position="287"/>
    </location>
</feature>
<feature type="sequence conflict" description="In Ref. 1; AAI21771." evidence="3" ref="1">
    <original>A</original>
    <variation>S</variation>
    <location>
        <position position="5"/>
    </location>
</feature>
<feature type="sequence conflict" description="In Ref. 1; AAI29298." evidence="3" ref="1">
    <original>C</original>
    <variation>S</variation>
    <location>
        <position position="50"/>
    </location>
</feature>
<feature type="sequence conflict" description="In Ref. 1; AAH83282." evidence="3" ref="1">
    <original>H</original>
    <variation>Q</variation>
    <location>
        <position position="77"/>
    </location>
</feature>
<feature type="sequence conflict" description="In Ref. 1; AAH97205/AAI15131/AAI29298." evidence="3" ref="1">
    <original>E</original>
    <variation>D</variation>
    <location>
        <position position="81"/>
    </location>
</feature>
<feature type="sequence conflict" description="In Ref. 1; AAI21771." evidence="3" ref="1">
    <original>L</original>
    <variation>Q</variation>
    <location>
        <position position="154"/>
    </location>
</feature>
<feature type="sequence conflict" description="In Ref. 1; AAH97205." evidence="3" ref="1">
    <original>S</original>
    <variation>P</variation>
    <location>
        <position position="193"/>
    </location>
</feature>
<feature type="sequence conflict" description="In Ref. 1; AAI21771/AAH83282." evidence="3" ref="1">
    <original>R</original>
    <variation>C</variation>
    <location>
        <position position="202"/>
    </location>
</feature>
<feature type="sequence conflict" description="In Ref. 1; AAI21771." evidence="3" ref="1">
    <original>S</original>
    <variation>N</variation>
    <location>
        <position position="213"/>
    </location>
</feature>
<feature type="sequence conflict" description="In Ref. 1; AAI21771." evidence="3" ref="1">
    <original>N</original>
    <variation>S</variation>
    <location>
        <position position="266"/>
    </location>
</feature>
<protein>
    <recommendedName>
        <fullName>PIH1 domain-containing protein 1</fullName>
    </recommendedName>
</protein>
<sequence>MDTDASLLLGVEHEQKQQEELYQQLLLQTMGKLQSDSPPSKVIRPQPGLCVKTSSVSDKKKVFLNICQSQTVPPPPHLSQEALVELLESEDPTSYRVPMSLGEPHTEVDNSSQGCTVYDVVINDEFFQKCEKDTLFQQFLIAVSLEGLENKYSLELSRDIKILKNRKFMGSIAEQNIRTKSKPIIQEIDSKESLTLPSAAKRPEFTLLVEPPSGKAEHLIAEILLPGVSSARSLVLDLGEDRLVLIARPSLFHLDIFFPVLIDQENSVAQYNTNTQTLTVTMPVVSL</sequence>
<dbReference type="EMBL" id="BC083282">
    <property type="protein sequence ID" value="AAH83282.1"/>
    <property type="molecule type" value="mRNA"/>
</dbReference>
<dbReference type="EMBL" id="BC097205">
    <property type="protein sequence ID" value="AAH97205.1"/>
    <property type="status" value="ALT_INIT"/>
    <property type="molecule type" value="mRNA"/>
</dbReference>
<dbReference type="EMBL" id="BC115130">
    <property type="protein sequence ID" value="AAI15131.1"/>
    <property type="status" value="ALT_INIT"/>
    <property type="molecule type" value="mRNA"/>
</dbReference>
<dbReference type="EMBL" id="BC121770">
    <property type="protein sequence ID" value="AAI21771.1"/>
    <property type="status" value="ALT_INIT"/>
    <property type="molecule type" value="mRNA"/>
</dbReference>
<dbReference type="EMBL" id="BC129297">
    <property type="protein sequence ID" value="AAI29298.1"/>
    <property type="status" value="ALT_INIT"/>
    <property type="molecule type" value="mRNA"/>
</dbReference>
<dbReference type="SMR" id="Q1RM55"/>
<dbReference type="FunCoup" id="Q1RM55">
    <property type="interactions" value="1356"/>
</dbReference>
<dbReference type="STRING" id="7955.ENSDARP00000055307"/>
<dbReference type="PaxDb" id="7955-ENSDARP00000055307"/>
<dbReference type="AGR" id="ZFIN:ZDB-GENE-050309-147"/>
<dbReference type="ZFIN" id="ZDB-GENE-050309-147">
    <property type="gene designation" value="pih1d1"/>
</dbReference>
<dbReference type="eggNOG" id="KOG4356">
    <property type="taxonomic scope" value="Eukaryota"/>
</dbReference>
<dbReference type="InParanoid" id="Q1RM55"/>
<dbReference type="PhylomeDB" id="Q1RM55"/>
<dbReference type="PRO" id="PR:Q1RM55"/>
<dbReference type="Proteomes" id="UP000000437">
    <property type="component" value="Unplaced"/>
</dbReference>
<dbReference type="GO" id="GO:0005737">
    <property type="term" value="C:cytoplasm"/>
    <property type="evidence" value="ECO:0000318"/>
    <property type="project" value="GO_Central"/>
</dbReference>
<dbReference type="GO" id="GO:0005634">
    <property type="term" value="C:nucleus"/>
    <property type="evidence" value="ECO:0000250"/>
    <property type="project" value="UniProtKB"/>
</dbReference>
<dbReference type="GO" id="GO:0097255">
    <property type="term" value="C:R2TP complex"/>
    <property type="evidence" value="ECO:0000318"/>
    <property type="project" value="GO_Central"/>
</dbReference>
<dbReference type="GO" id="GO:1990904">
    <property type="term" value="C:ribonucleoprotein complex"/>
    <property type="evidence" value="ECO:0000318"/>
    <property type="project" value="GO_Central"/>
</dbReference>
<dbReference type="GO" id="GO:0070286">
    <property type="term" value="P:axonemal dynein complex assembly"/>
    <property type="evidence" value="ECO:0000315"/>
    <property type="project" value="ZFIN"/>
</dbReference>
<dbReference type="GO" id="GO:0000492">
    <property type="term" value="P:box C/D snoRNP assembly"/>
    <property type="evidence" value="ECO:0000318"/>
    <property type="project" value="GO_Central"/>
</dbReference>
<dbReference type="GO" id="GO:0006364">
    <property type="term" value="P:rRNA processing"/>
    <property type="evidence" value="ECO:0000318"/>
    <property type="project" value="GO_Central"/>
</dbReference>
<dbReference type="InterPro" id="IPR050734">
    <property type="entry name" value="PIH1/Kintoun_subfamily"/>
</dbReference>
<dbReference type="InterPro" id="IPR012981">
    <property type="entry name" value="PIH1_N"/>
</dbReference>
<dbReference type="InterPro" id="IPR041442">
    <property type="entry name" value="PIH1D1/2/3_CS-like"/>
</dbReference>
<dbReference type="PANTHER" id="PTHR22997">
    <property type="entry name" value="PIH1 DOMAIN-CONTAINING PROTEIN 1"/>
    <property type="match status" value="1"/>
</dbReference>
<dbReference type="PANTHER" id="PTHR22997:SF0">
    <property type="entry name" value="PIH1 DOMAIN-CONTAINING PROTEIN 1"/>
    <property type="match status" value="1"/>
</dbReference>
<dbReference type="Pfam" id="PF08190">
    <property type="entry name" value="PIH1"/>
    <property type="match status" value="1"/>
</dbReference>
<dbReference type="Pfam" id="PF18201">
    <property type="entry name" value="PIH1_CS"/>
    <property type="match status" value="1"/>
</dbReference>
<gene>
    <name type="primary">pih1d1</name>
    <name type="ORF">im:7150545</name>
</gene>